<keyword id="KW-0238">DNA-binding</keyword>
<keyword id="KW-0479">Metal-binding</keyword>
<keyword id="KW-0539">Nucleus</keyword>
<keyword id="KW-1185">Reference proteome</keyword>
<keyword id="KW-0678">Repressor</keyword>
<keyword id="KW-0804">Transcription</keyword>
<keyword id="KW-0805">Transcription regulation</keyword>
<keyword id="KW-0862">Zinc</keyword>
<keyword id="KW-0863">Zinc-finger</keyword>
<gene>
    <name type="primary">zgpat</name>
    <name type="ORF">TEgg043k09.1</name>
</gene>
<reference key="1">
    <citation type="submission" date="2006-10" db="EMBL/GenBank/DDBJ databases">
        <authorList>
            <consortium name="Sanger Xenopus tropicalis EST/cDNA project"/>
        </authorList>
    </citation>
    <scope>NUCLEOTIDE SEQUENCE [LARGE SCALE MRNA]</scope>
    <source>
        <tissue>Egg</tissue>
    </source>
</reference>
<reference key="2">
    <citation type="submission" date="2008-11" db="EMBL/GenBank/DDBJ databases">
        <authorList>
            <consortium name="NIH - Xenopus Gene Collection (XGC) project"/>
        </authorList>
    </citation>
    <scope>NUCLEOTIDE SEQUENCE [LARGE SCALE MRNA]</scope>
    <source>
        <tissue>Embryo</tissue>
        <tissue>Gastrula</tissue>
    </source>
</reference>
<organism>
    <name type="scientific">Xenopus tropicalis</name>
    <name type="common">Western clawed frog</name>
    <name type="synonym">Silurana tropicalis</name>
    <dbReference type="NCBI Taxonomy" id="8364"/>
    <lineage>
        <taxon>Eukaryota</taxon>
        <taxon>Metazoa</taxon>
        <taxon>Chordata</taxon>
        <taxon>Craniata</taxon>
        <taxon>Vertebrata</taxon>
        <taxon>Euteleostomi</taxon>
        <taxon>Amphibia</taxon>
        <taxon>Batrachia</taxon>
        <taxon>Anura</taxon>
        <taxon>Pipoidea</taxon>
        <taxon>Pipidae</taxon>
        <taxon>Xenopodinae</taxon>
        <taxon>Xenopus</taxon>
        <taxon>Silurana</taxon>
    </lineage>
</organism>
<accession>Q28H71</accession>
<accession>B3DL93</accession>
<protein>
    <recommendedName>
        <fullName>Zinc finger CCCH-type with G patch domain-containing protein</fullName>
    </recommendedName>
</protein>
<evidence type="ECO:0000250" key="1"/>
<evidence type="ECO:0000255" key="2">
    <source>
        <dbReference type="PROSITE-ProRule" id="PRU00092"/>
    </source>
</evidence>
<evidence type="ECO:0000255" key="3">
    <source>
        <dbReference type="PROSITE-ProRule" id="PRU00723"/>
    </source>
</evidence>
<evidence type="ECO:0000256" key="4">
    <source>
        <dbReference type="SAM" id="MobiDB-lite"/>
    </source>
</evidence>
<evidence type="ECO:0000305" key="5"/>
<comment type="function">
    <text evidence="1">Transcription repressor that specifically binds the 5'-GGAG[GA]A[GA]A-3' consensus sequence. Represses transcription by recruiting the chromatin multiprotein complex NuRD to target promoters. Negatively regulates expression of EGFR, a gene involved in cell proliferation, survival and migration (By similarity).</text>
</comment>
<comment type="subcellular location">
    <subcellularLocation>
        <location evidence="1">Nucleus</location>
    </subcellularLocation>
</comment>
<proteinExistence type="evidence at transcript level"/>
<sequence>MEEESLAAALHTYRAQLEQVELSLRAGTDPTQLEDLTQLRNDLQQLIELTESSLLSVRKCKLLSSLEGSASLPAPEEPAAISSQDEEYEAFRRAIGEEPQPPGAGDGASTGSKDSEEEEEEEDGSSGMKVKAPYYSTWGTLEYHNAMVVGSEQLEDGEAGVRVLYLYPTHKAMKPCPFFLDGKCRFDDSCRFSHGQVVALAELQPFAEADVASLAVGSPCLAQHSDGIWYPARITDIKSGFYTVKFDSLLLKESVLEADSIIPPLRGSDSSSSDDDDDDEEEDDAAEDSGYARVLGAGSAGSAHSSQFGGWEAHTRGIGSKLLARMGYEIGKGLGRNAEGRVEPIQAVLLPKGKSLDQCIEMQQRKKAGGKREHKAGKRRPRATGRGGGTKSARNVFDFLNEKLEGRPSGAQPGESRRAAERKGKELYNASKDSKRALSVQVAVTAQRIQQKQREIGHLQEALARNVGRDSVVSNQLELRLSGARRELVMLQQEEHSLQREQRKADTHKKMTEF</sequence>
<feature type="chain" id="PRO_0000385196" description="Zinc finger CCCH-type with G patch domain-containing protein">
    <location>
        <begin position="1"/>
        <end position="514"/>
    </location>
</feature>
<feature type="domain" description="G-patch" evidence="2">
    <location>
        <begin position="315"/>
        <end position="373"/>
    </location>
</feature>
<feature type="zinc finger region" description="C3H1-type" evidence="3">
    <location>
        <begin position="171"/>
        <end position="197"/>
    </location>
</feature>
<feature type="region of interest" description="Disordered" evidence="4">
    <location>
        <begin position="96"/>
        <end position="129"/>
    </location>
</feature>
<feature type="region of interest" description="Disordered" evidence="4">
    <location>
        <begin position="262"/>
        <end position="288"/>
    </location>
</feature>
<feature type="region of interest" description="Disordered" evidence="4">
    <location>
        <begin position="363"/>
        <end position="422"/>
    </location>
</feature>
<feature type="region of interest" description="Disordered" evidence="4">
    <location>
        <begin position="494"/>
        <end position="514"/>
    </location>
</feature>
<feature type="compositionally biased region" description="Acidic residues" evidence="4">
    <location>
        <begin position="115"/>
        <end position="124"/>
    </location>
</feature>
<feature type="compositionally biased region" description="Acidic residues" evidence="4">
    <location>
        <begin position="272"/>
        <end position="287"/>
    </location>
</feature>
<feature type="compositionally biased region" description="Basic residues" evidence="4">
    <location>
        <begin position="365"/>
        <end position="383"/>
    </location>
</feature>
<feature type="sequence conflict" description="In Ref. 2; AAI67358." evidence="5" ref="2">
    <original>K</original>
    <variation>E</variation>
    <location>
        <position position="238"/>
    </location>
</feature>
<feature type="sequence conflict" description="In Ref. 2; AAI67358." evidence="5" ref="2">
    <location>
        <position position="274"/>
    </location>
</feature>
<name>ZGPAT_XENTR</name>
<dbReference type="EMBL" id="CR761014">
    <property type="protein sequence ID" value="CAJ82152.1"/>
    <property type="molecule type" value="mRNA"/>
</dbReference>
<dbReference type="EMBL" id="BC167358">
    <property type="protein sequence ID" value="AAI67358.1"/>
    <property type="molecule type" value="mRNA"/>
</dbReference>
<dbReference type="EMBL" id="BC171133">
    <property type="protein sequence ID" value="AAI71133.1"/>
    <property type="molecule type" value="mRNA"/>
</dbReference>
<dbReference type="EMBL" id="BC171135">
    <property type="protein sequence ID" value="AAI71135.1"/>
    <property type="molecule type" value="mRNA"/>
</dbReference>
<dbReference type="RefSeq" id="NP_001016444.1">
    <property type="nucleotide sequence ID" value="NM_001016444.2"/>
</dbReference>
<dbReference type="SMR" id="Q28H71"/>
<dbReference type="FunCoup" id="Q28H71">
    <property type="interactions" value="1991"/>
</dbReference>
<dbReference type="PaxDb" id="8364-ENSXETP00000055302"/>
<dbReference type="GeneID" id="549198"/>
<dbReference type="KEGG" id="xtr:549198"/>
<dbReference type="CTD" id="84619"/>
<dbReference type="Xenbase" id="XB-GENE-6257472">
    <property type="gene designation" value="zgpat"/>
</dbReference>
<dbReference type="eggNOG" id="KOG2185">
    <property type="taxonomic scope" value="Eukaryota"/>
</dbReference>
<dbReference type="HOGENOM" id="CLU_117468_0_0_1"/>
<dbReference type="InParanoid" id="Q28H71"/>
<dbReference type="OrthoDB" id="4822at2759"/>
<dbReference type="Proteomes" id="UP000008143">
    <property type="component" value="Chromosome 10"/>
</dbReference>
<dbReference type="GO" id="GO:0005634">
    <property type="term" value="C:nucleus"/>
    <property type="evidence" value="ECO:0000250"/>
    <property type="project" value="UniProtKB"/>
</dbReference>
<dbReference type="GO" id="GO:0003700">
    <property type="term" value="F:DNA-binding transcription factor activity"/>
    <property type="evidence" value="ECO:0000250"/>
    <property type="project" value="UniProtKB"/>
</dbReference>
<dbReference type="GO" id="GO:0043565">
    <property type="term" value="F:sequence-specific DNA binding"/>
    <property type="evidence" value="ECO:0000250"/>
    <property type="project" value="UniProtKB"/>
</dbReference>
<dbReference type="GO" id="GO:0008270">
    <property type="term" value="F:zinc ion binding"/>
    <property type="evidence" value="ECO:0007669"/>
    <property type="project" value="UniProtKB-KW"/>
</dbReference>
<dbReference type="GO" id="GO:0045892">
    <property type="term" value="P:negative regulation of DNA-templated transcription"/>
    <property type="evidence" value="ECO:0000250"/>
    <property type="project" value="UniProtKB"/>
</dbReference>
<dbReference type="GO" id="GO:0007175">
    <property type="term" value="P:negative regulation of epidermal growth factor-activated receptor activity"/>
    <property type="evidence" value="ECO:0000250"/>
    <property type="project" value="UniProtKB"/>
</dbReference>
<dbReference type="CDD" id="cd20384">
    <property type="entry name" value="Tudor_ZGPAT"/>
    <property type="match status" value="1"/>
</dbReference>
<dbReference type="FunFam" id="2.30.30.1190:FF:000001">
    <property type="entry name" value="zinc finger CCCH-type with G patch domain-containing protein"/>
    <property type="match status" value="1"/>
</dbReference>
<dbReference type="Gene3D" id="2.30.30.1190">
    <property type="match status" value="1"/>
</dbReference>
<dbReference type="Gene3D" id="2.30.30.140">
    <property type="match status" value="1"/>
</dbReference>
<dbReference type="InterPro" id="IPR000467">
    <property type="entry name" value="G_patch_dom"/>
</dbReference>
<dbReference type="InterPro" id="IPR041367">
    <property type="entry name" value="Znf-CCCH_4"/>
</dbReference>
<dbReference type="InterPro" id="IPR000571">
    <property type="entry name" value="Znf_CCCH"/>
</dbReference>
<dbReference type="PANTHER" id="PTHR46297">
    <property type="entry name" value="ZINC FINGER CCCH-TYPE WITH G PATCH DOMAIN-CONTAINING PROTEIN"/>
    <property type="match status" value="1"/>
</dbReference>
<dbReference type="PANTHER" id="PTHR46297:SF1">
    <property type="entry name" value="ZINC FINGER CCCH-TYPE WITH G PATCH DOMAIN-CONTAINING PROTEIN"/>
    <property type="match status" value="1"/>
</dbReference>
<dbReference type="Pfam" id="PF01585">
    <property type="entry name" value="G-patch"/>
    <property type="match status" value="1"/>
</dbReference>
<dbReference type="Pfam" id="PF18044">
    <property type="entry name" value="zf-CCCH_4"/>
    <property type="match status" value="1"/>
</dbReference>
<dbReference type="SMART" id="SM00443">
    <property type="entry name" value="G_patch"/>
    <property type="match status" value="1"/>
</dbReference>
<dbReference type="SMART" id="SM00356">
    <property type="entry name" value="ZnF_C3H1"/>
    <property type="match status" value="1"/>
</dbReference>
<dbReference type="SUPFAM" id="SSF63748">
    <property type="entry name" value="Tudor/PWWP/MBT"/>
    <property type="match status" value="1"/>
</dbReference>
<dbReference type="PROSITE" id="PS50174">
    <property type="entry name" value="G_PATCH"/>
    <property type="match status" value="1"/>
</dbReference>
<dbReference type="PROSITE" id="PS50103">
    <property type="entry name" value="ZF_C3H1"/>
    <property type="match status" value="1"/>
</dbReference>